<protein>
    <recommendedName>
        <fullName evidence="1">UPF0301 protein Sbal195_3177</fullName>
    </recommendedName>
</protein>
<name>Y3177_SHEB9</name>
<accession>A9KXN7</accession>
<organism>
    <name type="scientific">Shewanella baltica (strain OS195)</name>
    <dbReference type="NCBI Taxonomy" id="399599"/>
    <lineage>
        <taxon>Bacteria</taxon>
        <taxon>Pseudomonadati</taxon>
        <taxon>Pseudomonadota</taxon>
        <taxon>Gammaproteobacteria</taxon>
        <taxon>Alteromonadales</taxon>
        <taxon>Shewanellaceae</taxon>
        <taxon>Shewanella</taxon>
    </lineage>
</organism>
<dbReference type="EMBL" id="CP000891">
    <property type="protein sequence ID" value="ABX50339.1"/>
    <property type="molecule type" value="Genomic_DNA"/>
</dbReference>
<dbReference type="RefSeq" id="WP_006082512.1">
    <property type="nucleotide sequence ID" value="NC_009997.1"/>
</dbReference>
<dbReference type="SMR" id="A9KXN7"/>
<dbReference type="KEGG" id="sbn:Sbal195_3177"/>
<dbReference type="HOGENOM" id="CLU_057596_1_0_6"/>
<dbReference type="Proteomes" id="UP000000770">
    <property type="component" value="Chromosome"/>
</dbReference>
<dbReference type="GO" id="GO:0005829">
    <property type="term" value="C:cytosol"/>
    <property type="evidence" value="ECO:0007669"/>
    <property type="project" value="TreeGrafter"/>
</dbReference>
<dbReference type="Gene3D" id="3.40.1740.10">
    <property type="entry name" value="VC0467-like"/>
    <property type="match status" value="1"/>
</dbReference>
<dbReference type="Gene3D" id="3.30.70.1300">
    <property type="entry name" value="VC0467-like domains"/>
    <property type="match status" value="1"/>
</dbReference>
<dbReference type="HAMAP" id="MF_00758">
    <property type="entry name" value="UPF0301"/>
    <property type="match status" value="1"/>
</dbReference>
<dbReference type="InterPro" id="IPR003774">
    <property type="entry name" value="AlgH-like"/>
</dbReference>
<dbReference type="NCBIfam" id="NF001266">
    <property type="entry name" value="PRK00228.1-1"/>
    <property type="match status" value="1"/>
</dbReference>
<dbReference type="PANTHER" id="PTHR30327">
    <property type="entry name" value="UNCHARACTERIZED PROTEIN YQGE"/>
    <property type="match status" value="1"/>
</dbReference>
<dbReference type="PANTHER" id="PTHR30327:SF1">
    <property type="entry name" value="UPF0301 PROTEIN YQGE"/>
    <property type="match status" value="1"/>
</dbReference>
<dbReference type="Pfam" id="PF02622">
    <property type="entry name" value="DUF179"/>
    <property type="match status" value="1"/>
</dbReference>
<dbReference type="SUPFAM" id="SSF143456">
    <property type="entry name" value="VC0467-like"/>
    <property type="match status" value="1"/>
</dbReference>
<reference key="1">
    <citation type="submission" date="2007-11" db="EMBL/GenBank/DDBJ databases">
        <title>Complete sequence of chromosome of Shewanella baltica OS195.</title>
        <authorList>
            <consortium name="US DOE Joint Genome Institute"/>
            <person name="Copeland A."/>
            <person name="Lucas S."/>
            <person name="Lapidus A."/>
            <person name="Barry K."/>
            <person name="Glavina del Rio T."/>
            <person name="Dalin E."/>
            <person name="Tice H."/>
            <person name="Pitluck S."/>
            <person name="Chain P."/>
            <person name="Malfatti S."/>
            <person name="Shin M."/>
            <person name="Vergez L."/>
            <person name="Schmutz J."/>
            <person name="Larimer F."/>
            <person name="Land M."/>
            <person name="Hauser L."/>
            <person name="Kyrpides N."/>
            <person name="Kim E."/>
            <person name="Brettar I."/>
            <person name="Rodrigues J."/>
            <person name="Konstantinidis K."/>
            <person name="Klappenbach J."/>
            <person name="Hofle M."/>
            <person name="Tiedje J."/>
            <person name="Richardson P."/>
        </authorList>
    </citation>
    <scope>NUCLEOTIDE SEQUENCE [LARGE SCALE GENOMIC DNA]</scope>
    <source>
        <strain>OS195</strain>
    </source>
</reference>
<gene>
    <name type="ordered locus">Sbal195_3177</name>
</gene>
<proteinExistence type="inferred from homology"/>
<evidence type="ECO:0000255" key="1">
    <source>
        <dbReference type="HAMAP-Rule" id="MF_00758"/>
    </source>
</evidence>
<sequence length="187" mass="20593">MESLQNHFLIAMPSLHDTFFERSVIYICEHDAKGAMGLVINKPLGIEVNSLLEQMDLPAEQVSTDLAFNANVMMGGPVSQDRGFVLHTSQPYWANSTDLGCGLMLTTSRDVLTAIGSNRSPEKFLVALGYAGWSKDQLEQELADNSWLTIPATNALLFDIKHEDRWPQASRALGFDAWQVSAQAGHA</sequence>
<comment type="similarity">
    <text evidence="1">Belongs to the UPF0301 (AlgH) family.</text>
</comment>
<feature type="chain" id="PRO_1000083518" description="UPF0301 protein Sbal195_3177">
    <location>
        <begin position="1"/>
        <end position="187"/>
    </location>
</feature>